<accession>Q035B4</accession>
<protein>
    <recommendedName>
        <fullName>Energy-coupling factor transporter transmembrane protein EcfT</fullName>
        <shortName>ECF transporter T component EcfT</shortName>
    </recommendedName>
</protein>
<keyword id="KW-1003">Cell membrane</keyword>
<keyword id="KW-0472">Membrane</keyword>
<keyword id="KW-1185">Reference proteome</keyword>
<keyword id="KW-0812">Transmembrane</keyword>
<keyword id="KW-1133">Transmembrane helix</keyword>
<keyword id="KW-0813">Transport</keyword>
<comment type="function">
    <text evidence="2">Part of a common energy-coupling factor (ECF) ABC-transporter complex. Unlike classic ABC transporters this ECF transporter provides the energy necessary to transport a number of different substrates including 5-formyltetrahydrofolate and thiamine. Expression of the complex plus FolT or ThiT in Lactococcus lactis subsp. cremoris (strain NZ9000) allows 5-formyltetrahydrofolate or thiamine uptake respectively; 5-formyltetrahydrofolate or thiamine are not taken up in the absence of FolT/ThiT or the EcfA1A2T complex. Deenergized L.lactis subsp. cremoris (treated with 2-deoxyglucose) do not take up substrate.</text>
</comment>
<comment type="subunit">
    <text evidence="2">Forms a stable energy-coupling factor (ECF) transporter complex probably composed of 2 membrane-embedded substrate-binding proteins (S component), 2 ATP-binding proteins (A component) and 2 transmembrane proteins (T component). This complex interacts with a number of substrate-specific components, including FolT and ThiT for 5-formyltetrahydrofolate and thiamine respectively. May be able to interact with more than 1 S component at a time.</text>
</comment>
<comment type="subcellular location">
    <subcellularLocation>
        <location evidence="3">Cell membrane</location>
        <topology evidence="3">Multi-pass membrane protein</topology>
    </subcellularLocation>
</comment>
<comment type="similarity">
    <text evidence="3">Belongs to the energy-coupling factor EcfT family.</text>
</comment>
<gene>
    <name type="primary">ecfT</name>
    <name type="ordered locus">LSEI_2472</name>
</gene>
<evidence type="ECO:0000255" key="1"/>
<evidence type="ECO:0000269" key="2">
    <source>
    </source>
</evidence>
<evidence type="ECO:0000305" key="3"/>
<dbReference type="EMBL" id="CP000423">
    <property type="protein sequence ID" value="ABJ71208.1"/>
    <property type="molecule type" value="Genomic_DNA"/>
</dbReference>
<dbReference type="RefSeq" id="WP_003567501.1">
    <property type="nucleotide sequence ID" value="NC_008526.1"/>
</dbReference>
<dbReference type="RefSeq" id="YP_807650.1">
    <property type="nucleotide sequence ID" value="NC_008526.1"/>
</dbReference>
<dbReference type="SMR" id="Q035B4"/>
<dbReference type="STRING" id="321967.LSEI_2472"/>
<dbReference type="BindingDB" id="Q035B4"/>
<dbReference type="PaxDb" id="321967-LSEI_2472"/>
<dbReference type="KEGG" id="lca:LSEI_2472"/>
<dbReference type="PATRIC" id="fig|321967.11.peg.2426"/>
<dbReference type="HOGENOM" id="CLU_056469_2_2_9"/>
<dbReference type="Proteomes" id="UP000001651">
    <property type="component" value="Chromosome"/>
</dbReference>
<dbReference type="GO" id="GO:0005886">
    <property type="term" value="C:plasma membrane"/>
    <property type="evidence" value="ECO:0007669"/>
    <property type="project" value="UniProtKB-SubCell"/>
</dbReference>
<dbReference type="GO" id="GO:0022857">
    <property type="term" value="F:transmembrane transporter activity"/>
    <property type="evidence" value="ECO:0007669"/>
    <property type="project" value="UniProtKB-UniRule"/>
</dbReference>
<dbReference type="CDD" id="cd16914">
    <property type="entry name" value="EcfT"/>
    <property type="match status" value="1"/>
</dbReference>
<dbReference type="HAMAP" id="MF_01461">
    <property type="entry name" value="EcfT"/>
    <property type="match status" value="1"/>
</dbReference>
<dbReference type="InterPro" id="IPR003339">
    <property type="entry name" value="ABC/ECF_trnsptr_transmembrane"/>
</dbReference>
<dbReference type="InterPro" id="IPR051611">
    <property type="entry name" value="ECF_transporter_component"/>
</dbReference>
<dbReference type="InterPro" id="IPR024919">
    <property type="entry name" value="EcfT"/>
</dbReference>
<dbReference type="PANTHER" id="PTHR34857">
    <property type="entry name" value="SLL0384 PROTEIN"/>
    <property type="match status" value="1"/>
</dbReference>
<dbReference type="PANTHER" id="PTHR34857:SF2">
    <property type="entry name" value="SLL0384 PROTEIN"/>
    <property type="match status" value="1"/>
</dbReference>
<dbReference type="Pfam" id="PF02361">
    <property type="entry name" value="CbiQ"/>
    <property type="match status" value="1"/>
</dbReference>
<sequence length="264" mass="30165">MDKLLLGRYIPGDSWVHRLDPRTKLIASFYYIGIVFLANNWQTYLMMFVATLFMIWLSGIKIGFFLKGVRPLIWLILFTVVLQVLFVRGGTVYWHWGWLWITEFGLINGAFIFVRFVLIIFMSTLLTLSTQPLSLADAVESLLKPLRVIRVPVTELALVLQIALRFVPTLMDQTTKIMNAQRARGVDFGEGNIFQQMKAVVPLLIPLFVSSFTTADELATAMEARGYQGGDDRTKYRILRYHRRDWVAAGGMLVLTGLLLLLRA</sequence>
<feature type="chain" id="PRO_0000408991" description="Energy-coupling factor transporter transmembrane protein EcfT">
    <location>
        <begin position="1"/>
        <end position="264"/>
    </location>
</feature>
<feature type="transmembrane region" description="Helical" evidence="1">
    <location>
        <begin position="24"/>
        <end position="44"/>
    </location>
</feature>
<feature type="transmembrane region" description="Helical" evidence="1">
    <location>
        <begin position="45"/>
        <end position="65"/>
    </location>
</feature>
<feature type="transmembrane region" description="Helical" evidence="1">
    <location>
        <begin position="72"/>
        <end position="92"/>
    </location>
</feature>
<feature type="transmembrane region" description="Helical" evidence="1">
    <location>
        <begin position="106"/>
        <end position="126"/>
    </location>
</feature>
<reference key="1">
    <citation type="journal article" date="2006" name="Proc. Natl. Acad. Sci. U.S.A.">
        <title>Comparative genomics of the lactic acid bacteria.</title>
        <authorList>
            <person name="Makarova K.S."/>
            <person name="Slesarev A."/>
            <person name="Wolf Y.I."/>
            <person name="Sorokin A."/>
            <person name="Mirkin B."/>
            <person name="Koonin E.V."/>
            <person name="Pavlov A."/>
            <person name="Pavlova N."/>
            <person name="Karamychev V."/>
            <person name="Polouchine N."/>
            <person name="Shakhova V."/>
            <person name="Grigoriev I."/>
            <person name="Lou Y."/>
            <person name="Rohksar D."/>
            <person name="Lucas S."/>
            <person name="Huang K."/>
            <person name="Goodstein D.M."/>
            <person name="Hawkins T."/>
            <person name="Plengvidhya V."/>
            <person name="Welker D."/>
            <person name="Hughes J."/>
            <person name="Goh Y."/>
            <person name="Benson A."/>
            <person name="Baldwin K."/>
            <person name="Lee J.-H."/>
            <person name="Diaz-Muniz I."/>
            <person name="Dosti B."/>
            <person name="Smeianov V."/>
            <person name="Wechter W."/>
            <person name="Barabote R."/>
            <person name="Lorca G."/>
            <person name="Altermann E."/>
            <person name="Barrangou R."/>
            <person name="Ganesan B."/>
            <person name="Xie Y."/>
            <person name="Rawsthorne H."/>
            <person name="Tamir D."/>
            <person name="Parker C."/>
            <person name="Breidt F."/>
            <person name="Broadbent J.R."/>
            <person name="Hutkins R."/>
            <person name="O'Sullivan D."/>
            <person name="Steele J."/>
            <person name="Unlu G."/>
            <person name="Saier M.H. Jr."/>
            <person name="Klaenhammer T."/>
            <person name="Richardson P."/>
            <person name="Kozyavkin S."/>
            <person name="Weimer B.C."/>
            <person name="Mills D.A."/>
        </authorList>
    </citation>
    <scope>NUCLEOTIDE SEQUENCE [LARGE SCALE GENOMIC DNA]</scope>
    <source>
        <strain>ATCC 334 / BCRC 17002 / CCUG 31169 / CIP 107868 / KCTC 3260 / NRRL B-441</strain>
    </source>
</reference>
<reference key="2">
    <citation type="journal article" date="2009" name="J. Bacteriol.">
        <title>A novel class of modular transporters for vitamins in prokaryotes.</title>
        <authorList>
            <person name="Rodionov D.A."/>
            <person name="Hebbeln P."/>
            <person name="Eudes A."/>
            <person name="ter Beek J."/>
            <person name="Rodionova I.A."/>
            <person name="Erkens G.B."/>
            <person name="Slotboom D.J."/>
            <person name="Gelfand M.S."/>
            <person name="Osterman A.L."/>
            <person name="Hanson A.D."/>
            <person name="Eitinger T."/>
        </authorList>
    </citation>
    <scope>FUNCTION AS A TRANSPORT COMPONENT</scope>
    <scope>SUBUNIT</scope>
    <scope>SUBSTRATES</scope>
    <scope>EXPRESSION IN L.LACTIS</scope>
    <source>
        <strain>ATCC 334 / BCRC 17002 / CCUG 31169 / CIP 107868 / KCTC 3260 / NRRL B-441</strain>
    </source>
</reference>
<proteinExistence type="evidence at protein level"/>
<name>ECFT_LACP3</name>
<organism>
    <name type="scientific">Lacticaseibacillus paracasei (strain ATCC 334 / BCRC 17002 / CCUG 31169 / CIP 107868 / KCTC 3260 / NRRL B-441)</name>
    <name type="common">Lactobacillus paracasei</name>
    <dbReference type="NCBI Taxonomy" id="321967"/>
    <lineage>
        <taxon>Bacteria</taxon>
        <taxon>Bacillati</taxon>
        <taxon>Bacillota</taxon>
        <taxon>Bacilli</taxon>
        <taxon>Lactobacillales</taxon>
        <taxon>Lactobacillaceae</taxon>
        <taxon>Lacticaseibacillus</taxon>
    </lineage>
</organism>